<comment type="subcellular location">
    <subcellularLocation>
        <location evidence="1">Cytoplasm</location>
    </subcellularLocation>
</comment>
<comment type="induction">
    <text evidence="2">In response to low temperature (at protein level).</text>
</comment>
<accession>P36995</accession>
<sequence length="71" mass="7717">MSNKMTGLVKWFNADKGFGFISPVDGSKDVFVHFSAIQNDNYRTLFEGQKVTFSIESGAKGPAAANVIITD</sequence>
<evidence type="ECO:0000250" key="1"/>
<evidence type="ECO:0000269" key="2">
    <source>
    </source>
</evidence>
<feature type="chain" id="PRO_0000100240" description="Cold shock-like protein CspB">
    <location>
        <begin position="1"/>
        <end position="71"/>
    </location>
</feature>
<feature type="domain" description="CSD">
    <location>
        <begin position="7"/>
        <end position="67"/>
    </location>
</feature>
<proteinExistence type="evidence at protein level"/>
<dbReference type="EMBL" id="L28429">
    <property type="protein sequence ID" value="AAA23618.1"/>
    <property type="molecule type" value="Genomic_DNA"/>
</dbReference>
<dbReference type="EMBL" id="AF003590">
    <property type="protein sequence ID" value="AAB61739.1"/>
    <property type="molecule type" value="Genomic_DNA"/>
</dbReference>
<dbReference type="EMBL" id="U00096">
    <property type="protein sequence ID" value="AAC74630.1"/>
    <property type="molecule type" value="Genomic_DNA"/>
</dbReference>
<dbReference type="EMBL" id="AP009048">
    <property type="protein sequence ID" value="BAA15256.1"/>
    <property type="molecule type" value="Genomic_DNA"/>
</dbReference>
<dbReference type="PIR" id="S43617">
    <property type="entry name" value="S43617"/>
</dbReference>
<dbReference type="RefSeq" id="NP_416075.1">
    <property type="nucleotide sequence ID" value="NC_000913.3"/>
</dbReference>
<dbReference type="RefSeq" id="WP_000066484.1">
    <property type="nucleotide sequence ID" value="NZ_SSUV01000001.1"/>
</dbReference>
<dbReference type="SMR" id="P36995"/>
<dbReference type="BioGRID" id="4259129">
    <property type="interactions" value="199"/>
</dbReference>
<dbReference type="DIP" id="DIP-9334N"/>
<dbReference type="FunCoup" id="P36995">
    <property type="interactions" value="308"/>
</dbReference>
<dbReference type="IntAct" id="P36995">
    <property type="interactions" value="33"/>
</dbReference>
<dbReference type="STRING" id="511145.b1557"/>
<dbReference type="jPOST" id="P36995"/>
<dbReference type="PaxDb" id="511145-b1557"/>
<dbReference type="EnsemblBacteria" id="AAC74630">
    <property type="protein sequence ID" value="AAC74630"/>
    <property type="gene ID" value="b1557"/>
</dbReference>
<dbReference type="GeneID" id="86859676"/>
<dbReference type="GeneID" id="946091"/>
<dbReference type="KEGG" id="ecj:JW1549"/>
<dbReference type="KEGG" id="eco:b1557"/>
<dbReference type="KEGG" id="ecoc:C3026_08985"/>
<dbReference type="PATRIC" id="fig|1411691.4.peg.706"/>
<dbReference type="EchoBASE" id="EB2119"/>
<dbReference type="eggNOG" id="COG1278">
    <property type="taxonomic scope" value="Bacteria"/>
</dbReference>
<dbReference type="HOGENOM" id="CLU_117621_2_1_6"/>
<dbReference type="InParanoid" id="P36995"/>
<dbReference type="OMA" id="FCPFSGK"/>
<dbReference type="OrthoDB" id="9810590at2"/>
<dbReference type="PhylomeDB" id="P36995"/>
<dbReference type="BioCyc" id="EcoCyc:EG12203-MONOMER"/>
<dbReference type="PRO" id="PR:P36995"/>
<dbReference type="Proteomes" id="UP000000625">
    <property type="component" value="Chromosome"/>
</dbReference>
<dbReference type="GO" id="GO:0005829">
    <property type="term" value="C:cytosol"/>
    <property type="evidence" value="ECO:0000314"/>
    <property type="project" value="EcoCyc"/>
</dbReference>
<dbReference type="GO" id="GO:0003676">
    <property type="term" value="F:nucleic acid binding"/>
    <property type="evidence" value="ECO:0000318"/>
    <property type="project" value="GO_Central"/>
</dbReference>
<dbReference type="GO" id="GO:0003723">
    <property type="term" value="F:RNA binding"/>
    <property type="evidence" value="ECO:0000314"/>
    <property type="project" value="EcoCyc"/>
</dbReference>
<dbReference type="GO" id="GO:0098847">
    <property type="term" value="F:sequence-specific single stranded DNA binding"/>
    <property type="evidence" value="ECO:0000314"/>
    <property type="project" value="EcoCyc"/>
</dbReference>
<dbReference type="GO" id="GO:0003697">
    <property type="term" value="F:single-stranded DNA binding"/>
    <property type="evidence" value="ECO:0000314"/>
    <property type="project" value="EcoliWiki"/>
</dbReference>
<dbReference type="GO" id="GO:0010468">
    <property type="term" value="P:regulation of gene expression"/>
    <property type="evidence" value="ECO:0000318"/>
    <property type="project" value="GO_Central"/>
</dbReference>
<dbReference type="GO" id="GO:0009409">
    <property type="term" value="P:response to cold"/>
    <property type="evidence" value="ECO:0000314"/>
    <property type="project" value="EcoliWiki"/>
</dbReference>
<dbReference type="CDD" id="cd04458">
    <property type="entry name" value="CSP_CDS"/>
    <property type="match status" value="1"/>
</dbReference>
<dbReference type="FunFam" id="2.40.50.140:FF:000006">
    <property type="entry name" value="Cold shock protein CspC"/>
    <property type="match status" value="1"/>
</dbReference>
<dbReference type="Gene3D" id="2.40.50.140">
    <property type="entry name" value="Nucleic acid-binding proteins"/>
    <property type="match status" value="1"/>
</dbReference>
<dbReference type="InterPro" id="IPR012156">
    <property type="entry name" value="Cold_shock_CspA"/>
</dbReference>
<dbReference type="InterPro" id="IPR050181">
    <property type="entry name" value="Cold_shock_domain"/>
</dbReference>
<dbReference type="InterPro" id="IPR011129">
    <property type="entry name" value="CSD"/>
</dbReference>
<dbReference type="InterPro" id="IPR019844">
    <property type="entry name" value="CSD_CS"/>
</dbReference>
<dbReference type="InterPro" id="IPR002059">
    <property type="entry name" value="CSP_DNA-bd"/>
</dbReference>
<dbReference type="InterPro" id="IPR012340">
    <property type="entry name" value="NA-bd_OB-fold"/>
</dbReference>
<dbReference type="NCBIfam" id="NF007679">
    <property type="entry name" value="PRK10354.1"/>
    <property type="match status" value="1"/>
</dbReference>
<dbReference type="PANTHER" id="PTHR11544">
    <property type="entry name" value="COLD SHOCK DOMAIN CONTAINING PROTEINS"/>
    <property type="match status" value="1"/>
</dbReference>
<dbReference type="Pfam" id="PF00313">
    <property type="entry name" value="CSD"/>
    <property type="match status" value="1"/>
</dbReference>
<dbReference type="PIRSF" id="PIRSF002599">
    <property type="entry name" value="Cold_shock_A"/>
    <property type="match status" value="1"/>
</dbReference>
<dbReference type="PRINTS" id="PR00050">
    <property type="entry name" value="COLDSHOCK"/>
</dbReference>
<dbReference type="SMART" id="SM00357">
    <property type="entry name" value="CSP"/>
    <property type="match status" value="1"/>
</dbReference>
<dbReference type="SUPFAM" id="SSF50249">
    <property type="entry name" value="Nucleic acid-binding proteins"/>
    <property type="match status" value="1"/>
</dbReference>
<dbReference type="PROSITE" id="PS00352">
    <property type="entry name" value="CSD_1"/>
    <property type="match status" value="1"/>
</dbReference>
<dbReference type="PROSITE" id="PS51857">
    <property type="entry name" value="CSD_2"/>
    <property type="match status" value="1"/>
</dbReference>
<name>CSPB_ECOLI</name>
<protein>
    <recommendedName>
        <fullName>Cold shock-like protein CspB</fullName>
        <shortName>CSP-B</shortName>
    </recommendedName>
</protein>
<keyword id="KW-0010">Activator</keyword>
<keyword id="KW-0963">Cytoplasm</keyword>
<keyword id="KW-0238">DNA-binding</keyword>
<keyword id="KW-1185">Reference proteome</keyword>
<keyword id="KW-0346">Stress response</keyword>
<keyword id="KW-0804">Transcription</keyword>
<keyword id="KW-0805">Transcription regulation</keyword>
<reference key="1">
    <citation type="journal article" date="1994" name="Mol. Microbiol.">
        <title>Family of the major cold-shock protein, CspA (CS7.4), of Escherichia coli, whose members show a high sequence similarity with the eukaryotic Y-box binding proteins.</title>
        <authorList>
            <person name="Lee S.J."/>
            <person name="Xie A."/>
            <person name="Jiang W."/>
            <person name="Etchegaray J.-P."/>
            <person name="Jones P.G."/>
            <person name="Inouye M."/>
        </authorList>
    </citation>
    <scope>NUCLEOTIDE SEQUENCE [GENOMIC DNA]</scope>
    <source>
        <strain>TAP90 / ATCC 47037</strain>
    </source>
</reference>
<reference key="2">
    <citation type="journal article" date="1997" name="J. Ind. Microbiol. Biotechnol.">
        <title>Detection and speciation of bacteria through PCR using universal major cold-shock protein primer oligomers.</title>
        <authorList>
            <person name="Francis K.P."/>
            <person name="Stewart G.S.A.B."/>
        </authorList>
    </citation>
    <scope>NUCLEOTIDE SEQUENCE [GENOMIC DNA]</scope>
    <source>
        <strain>K12 / W3110 / ATCC 27325 / DSM 5911</strain>
    </source>
</reference>
<reference key="3">
    <citation type="journal article" date="1996" name="DNA Res.">
        <title>A 570-kb DNA sequence of the Escherichia coli K-12 genome corresponding to the 28.0-40.1 min region on the linkage map.</title>
        <authorList>
            <person name="Aiba H."/>
            <person name="Baba T."/>
            <person name="Fujita K."/>
            <person name="Hayashi K."/>
            <person name="Inada T."/>
            <person name="Isono K."/>
            <person name="Itoh T."/>
            <person name="Kasai H."/>
            <person name="Kashimoto K."/>
            <person name="Kimura S."/>
            <person name="Kitakawa M."/>
            <person name="Kitagawa M."/>
            <person name="Makino K."/>
            <person name="Miki T."/>
            <person name="Mizobuchi K."/>
            <person name="Mori H."/>
            <person name="Mori T."/>
            <person name="Motomura K."/>
            <person name="Nakade S."/>
            <person name="Nakamura Y."/>
            <person name="Nashimoto H."/>
            <person name="Nishio Y."/>
            <person name="Oshima T."/>
            <person name="Saito N."/>
            <person name="Sampei G."/>
            <person name="Seki Y."/>
            <person name="Sivasundaram S."/>
            <person name="Tagami H."/>
            <person name="Takeda J."/>
            <person name="Takemoto K."/>
            <person name="Takeuchi Y."/>
            <person name="Wada C."/>
            <person name="Yamamoto Y."/>
            <person name="Horiuchi T."/>
        </authorList>
    </citation>
    <scope>NUCLEOTIDE SEQUENCE [LARGE SCALE GENOMIC DNA]</scope>
    <source>
        <strain>K12 / W3110 / ATCC 27325 / DSM 5911</strain>
    </source>
</reference>
<reference key="4">
    <citation type="journal article" date="1997" name="Science">
        <title>The complete genome sequence of Escherichia coli K-12.</title>
        <authorList>
            <person name="Blattner F.R."/>
            <person name="Plunkett G. III"/>
            <person name="Bloch C.A."/>
            <person name="Perna N.T."/>
            <person name="Burland V."/>
            <person name="Riley M."/>
            <person name="Collado-Vides J."/>
            <person name="Glasner J.D."/>
            <person name="Rode C.K."/>
            <person name="Mayhew G.F."/>
            <person name="Gregor J."/>
            <person name="Davis N.W."/>
            <person name="Kirkpatrick H.A."/>
            <person name="Goeden M.A."/>
            <person name="Rose D.J."/>
            <person name="Mau B."/>
            <person name="Shao Y."/>
        </authorList>
    </citation>
    <scope>NUCLEOTIDE SEQUENCE [LARGE SCALE GENOMIC DNA]</scope>
    <source>
        <strain>K12 / MG1655 / ATCC 47076</strain>
    </source>
</reference>
<reference key="5">
    <citation type="journal article" date="2006" name="Mol. Syst. Biol.">
        <title>Highly accurate genome sequences of Escherichia coli K-12 strains MG1655 and W3110.</title>
        <authorList>
            <person name="Hayashi K."/>
            <person name="Morooka N."/>
            <person name="Yamamoto Y."/>
            <person name="Fujita K."/>
            <person name="Isono K."/>
            <person name="Choi S."/>
            <person name="Ohtsubo E."/>
            <person name="Baba T."/>
            <person name="Wanner B.L."/>
            <person name="Mori H."/>
            <person name="Horiuchi T."/>
        </authorList>
    </citation>
    <scope>NUCLEOTIDE SEQUENCE [LARGE SCALE GENOMIC DNA]</scope>
    <source>
        <strain>K12 / W3110 / ATCC 27325 / DSM 5911</strain>
    </source>
</reference>
<reference key="6">
    <citation type="journal article" date="1996" name="Mol. Microbiol.">
        <title>RbfA, a 30S ribosomal binding factor, is a cold-shock protein whose absence triggers the cold-shock response.</title>
        <authorList>
            <person name="Jones P.G."/>
            <person name="Inouye M."/>
        </authorList>
    </citation>
    <scope>INDUCTION BY COLD-SHOCK</scope>
    <source>
        <strain>CSH142</strain>
    </source>
</reference>
<gene>
    <name type="primary">cspB</name>
    <name type="ordered locus">b1557</name>
    <name type="ordered locus">JW1549</name>
</gene>
<organism>
    <name type="scientific">Escherichia coli (strain K12)</name>
    <dbReference type="NCBI Taxonomy" id="83333"/>
    <lineage>
        <taxon>Bacteria</taxon>
        <taxon>Pseudomonadati</taxon>
        <taxon>Pseudomonadota</taxon>
        <taxon>Gammaproteobacteria</taxon>
        <taxon>Enterobacterales</taxon>
        <taxon>Enterobacteriaceae</taxon>
        <taxon>Escherichia</taxon>
    </lineage>
</organism>